<sequence>MGLSTLEQKLTEIISAPVEALGYELVGIEFIRGRQSTLRIYIDSDDGITVDACADVSHQVSAVLDVEDPITVAYNLEVSSPGLDRPMFTAEHYTRYLGEEVTLVLRMAMQNRRKWQGIIKAVDGEMITVTVDGKDEVFALSNIQKANLVPHF</sequence>
<keyword id="KW-0963">Cytoplasm</keyword>
<keyword id="KW-1185">Reference proteome</keyword>
<keyword id="KW-0690">Ribosome biogenesis</keyword>
<comment type="function">
    <text evidence="1">Required for maturation of 30S ribosomal subunits.</text>
</comment>
<comment type="subcellular location">
    <subcellularLocation>
        <location evidence="1">Cytoplasm</location>
    </subcellularLocation>
</comment>
<comment type="similarity">
    <text evidence="1">Belongs to the RimP family.</text>
</comment>
<comment type="sequence caution" evidence="2">
    <conflict type="erroneous initiation">
        <sequence resource="EMBL-CDS" id="AAM84274"/>
    </conflict>
</comment>
<comment type="sequence caution" evidence="2">
    <conflict type="erroneous initiation">
        <sequence resource="EMBL-CDS" id="AAS60855"/>
    </conflict>
</comment>
<name>RIMP_YERPE</name>
<evidence type="ECO:0000255" key="1">
    <source>
        <dbReference type="HAMAP-Rule" id="MF_01077"/>
    </source>
</evidence>
<evidence type="ECO:0000305" key="2"/>
<organism>
    <name type="scientific">Yersinia pestis</name>
    <dbReference type="NCBI Taxonomy" id="632"/>
    <lineage>
        <taxon>Bacteria</taxon>
        <taxon>Pseudomonadati</taxon>
        <taxon>Pseudomonadota</taxon>
        <taxon>Gammaproteobacteria</taxon>
        <taxon>Enterobacterales</taxon>
        <taxon>Yersiniaceae</taxon>
        <taxon>Yersinia</taxon>
    </lineage>
</organism>
<accession>Q8ZBC0</accession>
<accession>Q0WBF1</accession>
<accession>Q8D1D3</accession>
<dbReference type="EMBL" id="AL590842">
    <property type="protein sequence ID" value="CAL22086.1"/>
    <property type="molecule type" value="Genomic_DNA"/>
</dbReference>
<dbReference type="EMBL" id="AE009952">
    <property type="protein sequence ID" value="AAM84274.1"/>
    <property type="status" value="ALT_INIT"/>
    <property type="molecule type" value="Genomic_DNA"/>
</dbReference>
<dbReference type="EMBL" id="AE017042">
    <property type="protein sequence ID" value="AAS60855.1"/>
    <property type="status" value="ALT_INIT"/>
    <property type="molecule type" value="Genomic_DNA"/>
</dbReference>
<dbReference type="PIR" id="AC0425">
    <property type="entry name" value="AC0425"/>
</dbReference>
<dbReference type="SMR" id="Q8ZBC0"/>
<dbReference type="STRING" id="214092.YPO3498"/>
<dbReference type="PaxDb" id="214092-YPO3498"/>
<dbReference type="EnsemblBacteria" id="AAS60855">
    <property type="protein sequence ID" value="AAS60855"/>
    <property type="gene ID" value="YP_0585"/>
</dbReference>
<dbReference type="KEGG" id="ype:YPO3498"/>
<dbReference type="KEGG" id="ypk:y0686"/>
<dbReference type="KEGG" id="ypm:YP_0585"/>
<dbReference type="eggNOG" id="COG0779">
    <property type="taxonomic scope" value="Bacteria"/>
</dbReference>
<dbReference type="HOGENOM" id="CLU_070525_1_1_6"/>
<dbReference type="OMA" id="YIHVSLY"/>
<dbReference type="Proteomes" id="UP000000815">
    <property type="component" value="Chromosome"/>
</dbReference>
<dbReference type="Proteomes" id="UP000001019">
    <property type="component" value="Chromosome"/>
</dbReference>
<dbReference type="Proteomes" id="UP000002490">
    <property type="component" value="Chromosome"/>
</dbReference>
<dbReference type="GO" id="GO:0005829">
    <property type="term" value="C:cytosol"/>
    <property type="evidence" value="ECO:0000318"/>
    <property type="project" value="GO_Central"/>
</dbReference>
<dbReference type="GO" id="GO:0000028">
    <property type="term" value="P:ribosomal small subunit assembly"/>
    <property type="evidence" value="ECO:0000318"/>
    <property type="project" value="GO_Central"/>
</dbReference>
<dbReference type="GO" id="GO:0006412">
    <property type="term" value="P:translation"/>
    <property type="evidence" value="ECO:0000318"/>
    <property type="project" value="GO_Central"/>
</dbReference>
<dbReference type="CDD" id="cd01734">
    <property type="entry name" value="YlxS_C"/>
    <property type="match status" value="1"/>
</dbReference>
<dbReference type="FunFam" id="2.30.30.180:FF:000001">
    <property type="entry name" value="Ribosome maturation factor RimP"/>
    <property type="match status" value="1"/>
</dbReference>
<dbReference type="FunFam" id="3.30.300.70:FF:000001">
    <property type="entry name" value="Ribosome maturation factor RimP"/>
    <property type="match status" value="1"/>
</dbReference>
<dbReference type="Gene3D" id="2.30.30.180">
    <property type="entry name" value="Ribosome maturation factor RimP, C-terminal domain"/>
    <property type="match status" value="1"/>
</dbReference>
<dbReference type="Gene3D" id="3.30.300.70">
    <property type="entry name" value="RimP-like superfamily, N-terminal"/>
    <property type="match status" value="1"/>
</dbReference>
<dbReference type="HAMAP" id="MF_01077">
    <property type="entry name" value="RimP"/>
    <property type="match status" value="1"/>
</dbReference>
<dbReference type="InterPro" id="IPR003728">
    <property type="entry name" value="Ribosome_maturation_RimP"/>
</dbReference>
<dbReference type="InterPro" id="IPR028998">
    <property type="entry name" value="RimP_C"/>
</dbReference>
<dbReference type="InterPro" id="IPR036847">
    <property type="entry name" value="RimP_C_sf"/>
</dbReference>
<dbReference type="InterPro" id="IPR028989">
    <property type="entry name" value="RimP_N"/>
</dbReference>
<dbReference type="InterPro" id="IPR035956">
    <property type="entry name" value="RimP_N_sf"/>
</dbReference>
<dbReference type="NCBIfam" id="NF000927">
    <property type="entry name" value="PRK00092.1-1"/>
    <property type="match status" value="1"/>
</dbReference>
<dbReference type="PANTHER" id="PTHR33867">
    <property type="entry name" value="RIBOSOME MATURATION FACTOR RIMP"/>
    <property type="match status" value="1"/>
</dbReference>
<dbReference type="PANTHER" id="PTHR33867:SF1">
    <property type="entry name" value="RIBOSOME MATURATION FACTOR RIMP"/>
    <property type="match status" value="1"/>
</dbReference>
<dbReference type="Pfam" id="PF17384">
    <property type="entry name" value="DUF150_C"/>
    <property type="match status" value="1"/>
</dbReference>
<dbReference type="Pfam" id="PF02576">
    <property type="entry name" value="RimP_N"/>
    <property type="match status" value="1"/>
</dbReference>
<dbReference type="SUPFAM" id="SSF74942">
    <property type="entry name" value="YhbC-like, C-terminal domain"/>
    <property type="match status" value="1"/>
</dbReference>
<dbReference type="SUPFAM" id="SSF75420">
    <property type="entry name" value="YhbC-like, N-terminal domain"/>
    <property type="match status" value="1"/>
</dbReference>
<proteinExistence type="inferred from homology"/>
<reference key="1">
    <citation type="journal article" date="2001" name="Nature">
        <title>Genome sequence of Yersinia pestis, the causative agent of plague.</title>
        <authorList>
            <person name="Parkhill J."/>
            <person name="Wren B.W."/>
            <person name="Thomson N.R."/>
            <person name="Titball R.W."/>
            <person name="Holden M.T.G."/>
            <person name="Prentice M.B."/>
            <person name="Sebaihia M."/>
            <person name="James K.D."/>
            <person name="Churcher C.M."/>
            <person name="Mungall K.L."/>
            <person name="Baker S."/>
            <person name="Basham D."/>
            <person name="Bentley S.D."/>
            <person name="Brooks K."/>
            <person name="Cerdeno-Tarraga A.-M."/>
            <person name="Chillingworth T."/>
            <person name="Cronin A."/>
            <person name="Davies R.M."/>
            <person name="Davis P."/>
            <person name="Dougan G."/>
            <person name="Feltwell T."/>
            <person name="Hamlin N."/>
            <person name="Holroyd S."/>
            <person name="Jagels K."/>
            <person name="Karlyshev A.V."/>
            <person name="Leather S."/>
            <person name="Moule S."/>
            <person name="Oyston P.C.F."/>
            <person name="Quail M.A."/>
            <person name="Rutherford K.M."/>
            <person name="Simmonds M."/>
            <person name="Skelton J."/>
            <person name="Stevens K."/>
            <person name="Whitehead S."/>
            <person name="Barrell B.G."/>
        </authorList>
    </citation>
    <scope>NUCLEOTIDE SEQUENCE [LARGE SCALE GENOMIC DNA]</scope>
    <source>
        <strain>CO-92 / Biovar Orientalis</strain>
    </source>
</reference>
<reference key="2">
    <citation type="journal article" date="2002" name="J. Bacteriol.">
        <title>Genome sequence of Yersinia pestis KIM.</title>
        <authorList>
            <person name="Deng W."/>
            <person name="Burland V."/>
            <person name="Plunkett G. III"/>
            <person name="Boutin A."/>
            <person name="Mayhew G.F."/>
            <person name="Liss P."/>
            <person name="Perna N.T."/>
            <person name="Rose D.J."/>
            <person name="Mau B."/>
            <person name="Zhou S."/>
            <person name="Schwartz D.C."/>
            <person name="Fetherston J.D."/>
            <person name="Lindler L.E."/>
            <person name="Brubaker R.R."/>
            <person name="Plano G.V."/>
            <person name="Straley S.C."/>
            <person name="McDonough K.A."/>
            <person name="Nilles M.L."/>
            <person name="Matson J.S."/>
            <person name="Blattner F.R."/>
            <person name="Perry R.D."/>
        </authorList>
    </citation>
    <scope>NUCLEOTIDE SEQUENCE [LARGE SCALE GENOMIC DNA]</scope>
    <source>
        <strain>KIM10+ / Biovar Mediaevalis</strain>
    </source>
</reference>
<reference key="3">
    <citation type="journal article" date="2004" name="DNA Res.">
        <title>Complete genome sequence of Yersinia pestis strain 91001, an isolate avirulent to humans.</title>
        <authorList>
            <person name="Song Y."/>
            <person name="Tong Z."/>
            <person name="Wang J."/>
            <person name="Wang L."/>
            <person name="Guo Z."/>
            <person name="Han Y."/>
            <person name="Zhang J."/>
            <person name="Pei D."/>
            <person name="Zhou D."/>
            <person name="Qin H."/>
            <person name="Pang X."/>
            <person name="Han Y."/>
            <person name="Zhai J."/>
            <person name="Li M."/>
            <person name="Cui B."/>
            <person name="Qi Z."/>
            <person name="Jin L."/>
            <person name="Dai R."/>
            <person name="Chen F."/>
            <person name="Li S."/>
            <person name="Ye C."/>
            <person name="Du Z."/>
            <person name="Lin W."/>
            <person name="Wang J."/>
            <person name="Yu J."/>
            <person name="Yang H."/>
            <person name="Wang J."/>
            <person name="Huang P."/>
            <person name="Yang R."/>
        </authorList>
    </citation>
    <scope>NUCLEOTIDE SEQUENCE [LARGE SCALE GENOMIC DNA]</scope>
    <source>
        <strain>91001 / Biovar Mediaevalis</strain>
    </source>
</reference>
<gene>
    <name evidence="1" type="primary">rimP</name>
    <name type="ordered locus">YPO3498</name>
    <name type="ordered locus">y0686</name>
    <name type="ordered locus">YP_0585</name>
</gene>
<protein>
    <recommendedName>
        <fullName evidence="1">Ribosome maturation factor RimP</fullName>
    </recommendedName>
</protein>
<feature type="chain" id="PRO_0000181958" description="Ribosome maturation factor RimP">
    <location>
        <begin position="1"/>
        <end position="152"/>
    </location>
</feature>